<evidence type="ECO:0000255" key="1">
    <source>
        <dbReference type="HAMAP-Rule" id="MF_01128"/>
    </source>
</evidence>
<accession>Q1CLU6</accession>
<accession>C4GQ68</accession>
<protein>
    <recommendedName>
        <fullName evidence="1">H(+)/Cl(-) exchange transporter ClcA</fullName>
    </recommendedName>
</protein>
<feature type="chain" id="PRO_0000301547" description="H(+)/Cl(-) exchange transporter ClcA">
    <location>
        <begin position="1"/>
        <end position="478"/>
    </location>
</feature>
<feature type="topological domain" description="Cytoplasmic" evidence="1">
    <location>
        <begin position="1"/>
        <end position="32"/>
    </location>
</feature>
<feature type="transmembrane region" description="Helical" evidence="1">
    <location>
        <begin position="33"/>
        <end position="69"/>
    </location>
</feature>
<feature type="topological domain" description="Periplasmic" evidence="1">
    <location>
        <begin position="70"/>
        <end position="76"/>
    </location>
</feature>
<feature type="transmembrane region" description="Helical" evidence="1">
    <location>
        <begin position="77"/>
        <end position="100"/>
    </location>
</feature>
<feature type="intramembrane region" description="Helical" evidence="1">
    <location>
        <begin position="109"/>
        <end position="116"/>
    </location>
</feature>
<feature type="topological domain" description="Cytoplasmic" evidence="1">
    <location>
        <begin position="117"/>
        <end position="123"/>
    </location>
</feature>
<feature type="transmembrane region" description="Helical" evidence="1">
    <location>
        <begin position="124"/>
        <end position="141"/>
    </location>
</feature>
<feature type="transmembrane region" description="Helical" evidence="1">
    <location>
        <begin position="148"/>
        <end position="166"/>
    </location>
</feature>
<feature type="topological domain" description="Cytoplasmic" evidence="1">
    <location>
        <begin position="167"/>
        <end position="176"/>
    </location>
</feature>
<feature type="intramembrane region" description="Helical" evidence="1">
    <location>
        <begin position="177"/>
        <end position="189"/>
    </location>
</feature>
<feature type="intramembrane region" description="Helical" evidence="1">
    <location>
        <begin position="193"/>
        <end position="201"/>
    </location>
</feature>
<feature type="topological domain" description="Cytoplasmic" evidence="1">
    <location>
        <begin position="202"/>
        <end position="214"/>
    </location>
</feature>
<feature type="transmembrane region" description="Helical" evidence="1">
    <location>
        <begin position="215"/>
        <end position="232"/>
    </location>
</feature>
<feature type="topological domain" description="Periplasmic" evidence="1">
    <location>
        <begin position="233"/>
        <end position="252"/>
    </location>
</feature>
<feature type="transmembrane region" description="Helical" evidence="1">
    <location>
        <begin position="253"/>
        <end position="281"/>
    </location>
</feature>
<feature type="topological domain" description="Cytoplasmic" evidence="1">
    <location>
        <begin position="282"/>
        <end position="287"/>
    </location>
</feature>
<feature type="transmembrane region" description="Helical" evidence="1">
    <location>
        <begin position="288"/>
        <end position="309"/>
    </location>
</feature>
<feature type="topological domain" description="Periplasmic" evidence="1">
    <location>
        <begin position="310"/>
        <end position="329"/>
    </location>
</feature>
<feature type="transmembrane region" description="Helical" evidence="1">
    <location>
        <begin position="330"/>
        <end position="349"/>
    </location>
</feature>
<feature type="transmembrane region" description="Helical" evidence="1">
    <location>
        <begin position="355"/>
        <end position="376"/>
    </location>
</feature>
<feature type="topological domain" description="Periplasmic" evidence="1">
    <location>
        <begin position="377"/>
        <end position="386"/>
    </location>
</feature>
<feature type="intramembrane region" description="Helical" evidence="1">
    <location>
        <begin position="387"/>
        <end position="401"/>
    </location>
</feature>
<feature type="intramembrane region" description="Note=Loop between two helices" evidence="1">
    <location>
        <begin position="402"/>
        <end position="404"/>
    </location>
</feature>
<feature type="intramembrane region" description="Helical" evidence="1">
    <location>
        <begin position="405"/>
        <end position="416"/>
    </location>
</feature>
<feature type="intramembrane region" description="Note=Loop between two helices" evidence="1">
    <location>
        <begin position="417"/>
        <end position="421"/>
    </location>
</feature>
<feature type="transmembrane region" description="Helical" evidence="1">
    <location>
        <begin position="422"/>
        <end position="438"/>
    </location>
</feature>
<feature type="topological domain" description="Cytoplasmic" evidence="1">
    <location>
        <begin position="439"/>
        <end position="478"/>
    </location>
</feature>
<feature type="short sequence motif" description="Selectivity filter part_1" evidence="1">
    <location>
        <begin position="106"/>
        <end position="110"/>
    </location>
</feature>
<feature type="short sequence motif" description="Selectivity filter part_2" evidence="1">
    <location>
        <begin position="146"/>
        <end position="150"/>
    </location>
</feature>
<feature type="short sequence motif" description="Selectivity filter part_3" evidence="1">
    <location>
        <begin position="355"/>
        <end position="359"/>
    </location>
</feature>
<feature type="binding site" evidence="1">
    <location>
        <position position="107"/>
    </location>
    <ligand>
        <name>chloride</name>
        <dbReference type="ChEBI" id="CHEBI:17996"/>
    </ligand>
</feature>
<feature type="binding site" evidence="1">
    <location>
        <position position="356"/>
    </location>
    <ligand>
        <name>chloride</name>
        <dbReference type="ChEBI" id="CHEBI:17996"/>
    </ligand>
</feature>
<feature type="binding site" evidence="1">
    <location>
        <position position="357"/>
    </location>
    <ligand>
        <name>chloride</name>
        <dbReference type="ChEBI" id="CHEBI:17996"/>
    </ligand>
</feature>
<feature type="binding site" evidence="1">
    <location>
        <position position="445"/>
    </location>
    <ligand>
        <name>chloride</name>
        <dbReference type="ChEBI" id="CHEBI:17996"/>
    </ligand>
</feature>
<feature type="site" description="Mediates proton transfer from the outer aqueous phase to the interior of the protein; involved in linking H(+) and Cl(-) transport" evidence="1">
    <location>
        <position position="148"/>
    </location>
</feature>
<feature type="site" description="Mediates proton transfer from the protein to the inner aqueous phase" evidence="1">
    <location>
        <position position="203"/>
    </location>
</feature>
<comment type="function">
    <text evidence="1">Proton-coupled chloride transporter. Functions as antiport system and exchanges two chloride ions for 1 proton. Probably acts as an electrical shunt for an outwardly-directed proton pump that is linked to amino acid decarboxylation, as part of the extreme acid resistance (XAR) response.</text>
</comment>
<comment type="catalytic activity">
    <reaction evidence="1">
        <text>2 chloride(in) + H(+)(out) = 2 chloride(out) + H(+)(in)</text>
        <dbReference type="Rhea" id="RHEA:29567"/>
        <dbReference type="ChEBI" id="CHEBI:15378"/>
        <dbReference type="ChEBI" id="CHEBI:17996"/>
    </reaction>
</comment>
<comment type="subunit">
    <text evidence="1">Homodimer.</text>
</comment>
<comment type="subcellular location">
    <subcellularLocation>
        <location evidence="1">Cell inner membrane</location>
        <topology evidence="1">Multi-pass membrane protein</topology>
    </subcellularLocation>
</comment>
<comment type="similarity">
    <text evidence="1">Belongs to the chloride channel (TC 2.A.49) family. ClcA subfamily.</text>
</comment>
<organism>
    <name type="scientific">Yersinia pestis bv. Antiqua (strain Nepal516)</name>
    <dbReference type="NCBI Taxonomy" id="377628"/>
    <lineage>
        <taxon>Bacteria</taxon>
        <taxon>Pseudomonadati</taxon>
        <taxon>Pseudomonadota</taxon>
        <taxon>Gammaproteobacteria</taxon>
        <taxon>Enterobacterales</taxon>
        <taxon>Yersiniaceae</taxon>
        <taxon>Yersinia</taxon>
    </lineage>
</organism>
<proteinExistence type="inferred from homology"/>
<keyword id="KW-0050">Antiport</keyword>
<keyword id="KW-0997">Cell inner membrane</keyword>
<keyword id="KW-1003">Cell membrane</keyword>
<keyword id="KW-0868">Chloride</keyword>
<keyword id="KW-0406">Ion transport</keyword>
<keyword id="KW-0472">Membrane</keyword>
<keyword id="KW-0812">Transmembrane</keyword>
<keyword id="KW-1133">Transmembrane helix</keyword>
<keyword id="KW-0813">Transport</keyword>
<dbReference type="EMBL" id="CP000305">
    <property type="protein sequence ID" value="ABG17034.1"/>
    <property type="molecule type" value="Genomic_DNA"/>
</dbReference>
<dbReference type="EMBL" id="ACNQ01000007">
    <property type="protein sequence ID" value="EEO77894.1"/>
    <property type="molecule type" value="Genomic_DNA"/>
</dbReference>
<dbReference type="RefSeq" id="WP_002209364.1">
    <property type="nucleotide sequence ID" value="NZ_ACNQ01000007.1"/>
</dbReference>
<dbReference type="SMR" id="Q1CLU6"/>
<dbReference type="GeneID" id="57975321"/>
<dbReference type="KEGG" id="ypn:YPN_0702"/>
<dbReference type="HOGENOM" id="CLU_015263_7_0_6"/>
<dbReference type="Proteomes" id="UP000008936">
    <property type="component" value="Chromosome"/>
</dbReference>
<dbReference type="GO" id="GO:0005886">
    <property type="term" value="C:plasma membrane"/>
    <property type="evidence" value="ECO:0007669"/>
    <property type="project" value="UniProtKB-SubCell"/>
</dbReference>
<dbReference type="GO" id="GO:0015297">
    <property type="term" value="F:antiporter activity"/>
    <property type="evidence" value="ECO:0007669"/>
    <property type="project" value="UniProtKB-UniRule"/>
</dbReference>
<dbReference type="GO" id="GO:0005247">
    <property type="term" value="F:voltage-gated chloride channel activity"/>
    <property type="evidence" value="ECO:0007669"/>
    <property type="project" value="TreeGrafter"/>
</dbReference>
<dbReference type="CDD" id="cd01031">
    <property type="entry name" value="EriC"/>
    <property type="match status" value="1"/>
</dbReference>
<dbReference type="FunFam" id="1.10.3080.10:FF:000005">
    <property type="entry name" value="H(+)/Cl(-) exchange transporter ClcA"/>
    <property type="match status" value="1"/>
</dbReference>
<dbReference type="Gene3D" id="1.10.3080.10">
    <property type="entry name" value="Clc chloride channel"/>
    <property type="match status" value="1"/>
</dbReference>
<dbReference type="HAMAP" id="MF_01128">
    <property type="entry name" value="CLC_ClcA"/>
    <property type="match status" value="1"/>
</dbReference>
<dbReference type="InterPro" id="IPR023861">
    <property type="entry name" value="Cl-channel_ClcA"/>
</dbReference>
<dbReference type="InterPro" id="IPR014743">
    <property type="entry name" value="Cl-channel_core"/>
</dbReference>
<dbReference type="InterPro" id="IPR001807">
    <property type="entry name" value="ClC"/>
</dbReference>
<dbReference type="NCBIfam" id="NF003640">
    <property type="entry name" value="PRK05277.1"/>
    <property type="match status" value="1"/>
</dbReference>
<dbReference type="PANTHER" id="PTHR45711">
    <property type="entry name" value="CHLORIDE CHANNEL PROTEIN"/>
    <property type="match status" value="1"/>
</dbReference>
<dbReference type="PANTHER" id="PTHR45711:SF6">
    <property type="entry name" value="CHLORIDE CHANNEL PROTEIN"/>
    <property type="match status" value="1"/>
</dbReference>
<dbReference type="Pfam" id="PF00654">
    <property type="entry name" value="Voltage_CLC"/>
    <property type="match status" value="1"/>
</dbReference>
<dbReference type="PRINTS" id="PR00762">
    <property type="entry name" value="CLCHANNEL"/>
</dbReference>
<dbReference type="SUPFAM" id="SSF81340">
    <property type="entry name" value="Clc chloride channel"/>
    <property type="match status" value="1"/>
</dbReference>
<name>CLCA_YERPN</name>
<reference key="1">
    <citation type="journal article" date="2006" name="J. Bacteriol.">
        <title>Complete genome sequence of Yersinia pestis strains Antiqua and Nepal516: evidence of gene reduction in an emerging pathogen.</title>
        <authorList>
            <person name="Chain P.S.G."/>
            <person name="Hu P."/>
            <person name="Malfatti S.A."/>
            <person name="Radnedge L."/>
            <person name="Larimer F."/>
            <person name="Vergez L.M."/>
            <person name="Worsham P."/>
            <person name="Chu M.C."/>
            <person name="Andersen G.L."/>
        </authorList>
    </citation>
    <scope>NUCLEOTIDE SEQUENCE [LARGE SCALE GENOMIC DNA]</scope>
    <source>
        <strain>Nepal516</strain>
    </source>
</reference>
<reference key="2">
    <citation type="submission" date="2009-04" db="EMBL/GenBank/DDBJ databases">
        <title>Yersinia pestis Nepal516A whole genome shotgun sequencing project.</title>
        <authorList>
            <person name="Plunkett G. III"/>
            <person name="Anderson B.D."/>
            <person name="Baumler D.J."/>
            <person name="Burland V."/>
            <person name="Cabot E.L."/>
            <person name="Glasner J.D."/>
            <person name="Mau B."/>
            <person name="Neeno-Eckwall E."/>
            <person name="Perna N.T."/>
            <person name="Munk A.C."/>
            <person name="Tapia R."/>
            <person name="Green L.D."/>
            <person name="Rogers Y.C."/>
            <person name="Detter J.C."/>
            <person name="Bruce D.C."/>
            <person name="Brettin T.S."/>
        </authorList>
    </citation>
    <scope>NUCLEOTIDE SEQUENCE [LARGE SCALE GENOMIC DNA]</scope>
    <source>
        <strain>Nepal516</strain>
    </source>
</reference>
<sequence length="478" mass="50847">MTHSTQQLSPEGVAEGKRGRLIRELVNRDKTPLIILIMAAVVGVVTGLLGVAFDRGVDWVQQQRLLALANVADYALLVWPLAFIMSALLAMMGYFLVSRFAPEAGGSGIPEIEGAMEEMRPVRWWRVIPVKFIGGLGTLGAGMVLGREGPMVQMGGNSGRMIVDIFRLRSPEARHSLLATGAAAGLSAAFNAPLAGILFVIEEMRSQFRYSLVSIKAVFIGVITSTIVYRYFNGERAIIEVGKLSDAPLNTLWLYLLLGIIFGAVGVIFNALIFRTQDMFVRFHGGDWRKLVLIGGLLGGMCGLLALLHGNAVGGGFALIPIAAAGNFSIGMLLFIFIARVITTLLCFGSGAPGGIFAPMLALGTILGTAFGLSCAHFFPQYGIEAGTFAIAGMGALFAASVRAPLTGIVLVLEMTDNYQLILPMIVTCLGATLIAQFMGGKPLYSAILARTLAKQEQARATVIAQEPAVENTPQIGK</sequence>
<gene>
    <name evidence="1" type="primary">clcA</name>
    <name evidence="1" type="synonym">eriC</name>
    <name type="ordered locus">YPN_0702</name>
    <name type="ORF">YP516_0746</name>
</gene>